<keyword id="KW-0028">Amino-acid biosynthesis</keyword>
<keyword id="KW-0057">Aromatic amino acid biosynthesis</keyword>
<keyword id="KW-0704">Schiff base</keyword>
<keyword id="KW-0808">Transferase</keyword>
<reference key="1">
    <citation type="submission" date="2007-06" db="EMBL/GenBank/DDBJ databases">
        <title>Complete sequence of Methanococcus aeolicus Nankai-3.</title>
        <authorList>
            <consortium name="US DOE Joint Genome Institute"/>
            <person name="Copeland A."/>
            <person name="Lucas S."/>
            <person name="Lapidus A."/>
            <person name="Barry K."/>
            <person name="Glavina del Rio T."/>
            <person name="Dalin E."/>
            <person name="Tice H."/>
            <person name="Pitluck S."/>
            <person name="Chain P."/>
            <person name="Malfatti S."/>
            <person name="Shin M."/>
            <person name="Vergez L."/>
            <person name="Schmutz J."/>
            <person name="Larimer F."/>
            <person name="Land M."/>
            <person name="Hauser L."/>
            <person name="Kyrpides N."/>
            <person name="Lykidis A."/>
            <person name="Sieprawska-Lupa M."/>
            <person name="Whitman W.B."/>
            <person name="Richardson P."/>
        </authorList>
    </citation>
    <scope>NUCLEOTIDE SEQUENCE [LARGE SCALE GENOMIC DNA]</scope>
    <source>
        <strain>ATCC BAA-1280 / DSM 17508 / OCM 812 / Nankai-3</strain>
    </source>
</reference>
<organism>
    <name type="scientific">Methanococcus aeolicus (strain ATCC BAA-1280 / DSM 17508 / OCM 812 / Nankai-3)</name>
    <dbReference type="NCBI Taxonomy" id="419665"/>
    <lineage>
        <taxon>Archaea</taxon>
        <taxon>Methanobacteriati</taxon>
        <taxon>Methanobacteriota</taxon>
        <taxon>Methanomada group</taxon>
        <taxon>Methanococci</taxon>
        <taxon>Methanococcales</taxon>
        <taxon>Methanococcaceae</taxon>
        <taxon>Methanococcus</taxon>
    </lineage>
</organism>
<proteinExistence type="inferred from homology"/>
<protein>
    <recommendedName>
        <fullName evidence="1">2-amino-3,7-dideoxy-D-threo-hept-6-ulosonate synthase</fullName>
        <shortName evidence="1">ADH synthase</shortName>
        <shortName evidence="1">ADHS</shortName>
        <shortName evidence="1">ADTH synthase</shortName>
        <ecNumber evidence="1">2.2.1.10</ecNumber>
    </recommendedName>
</protein>
<name>ADHS_META3</name>
<evidence type="ECO:0000255" key="1">
    <source>
        <dbReference type="HAMAP-Rule" id="MF_00960"/>
    </source>
</evidence>
<gene>
    <name evidence="1" type="primary">aroA'</name>
    <name type="ordered locus">Maeo_0316</name>
</gene>
<comment type="function">
    <text evidence="1">Catalyzes a transaldol reaction between 6-deoxy-5-ketofructose 1-phosphate (DKFP) and L-aspartate semialdehyde (ASA) with an elimination of hydroxypyruvaldehyde phosphate to yield 2-amino-3,7-dideoxy-D-threo-hept-6-ulosonate (ADH). Plays a key role in an alternative pathway of the biosynthesis of 3-dehydroquinate (DHQ), which is involved in the canonical pathway for the biosynthesis of aromatic amino acids.</text>
</comment>
<comment type="catalytic activity">
    <reaction evidence="1">
        <text>1-deoxy-D-threo-hexo-2,5-diulose 6-phosphate + L-aspartate 4-semialdehyde = 2,3-dioxopropyl phosphate + 2-amino-2,3,7-trideoxy-D-lyxo-hept-6-ulosonate</text>
        <dbReference type="Rhea" id="RHEA:25952"/>
        <dbReference type="ChEBI" id="CHEBI:58859"/>
        <dbReference type="ChEBI" id="CHEBI:58860"/>
        <dbReference type="ChEBI" id="CHEBI:58861"/>
        <dbReference type="ChEBI" id="CHEBI:537519"/>
        <dbReference type="EC" id="2.2.1.10"/>
    </reaction>
</comment>
<comment type="subunit">
    <text evidence="1">Homodecamer.</text>
</comment>
<comment type="similarity">
    <text evidence="1">Belongs to the DeoC/FbaB aldolase family. ADHS subfamily.</text>
</comment>
<sequence>MKMFNNIKNTGKLIRLERIFDKKSEKTVIIPMDHGVSSGPVAGLKDMRTAINSVAEGGANSVLVHKGIVRHGHRGYGKDIGLIIHLSAGTGVSPDPNEKVIVTSVEEAIRMGADAVSVHVNMGAPTDCQMYQDLGKIAETCEYWGMPLIAMMYPRGEKITDEKDPEFVAHAARLGAELGADIIKTNYTGDIDSFKDVVKGCPAPIIIAGGAKSTDAEYLQMVKDSIEAGGAGVASGRNVFQHKDVIGITKATAMVVHENADVEEALKVIKK</sequence>
<feature type="chain" id="PRO_0000363667" description="2-amino-3,7-dideoxy-D-threo-hept-6-ulosonate synthase">
    <location>
        <begin position="1"/>
        <end position="271"/>
    </location>
</feature>
<feature type="active site" description="Proton acceptor" evidence="1">
    <location>
        <position position="33"/>
    </location>
</feature>
<feature type="active site" description="Proton donor" evidence="1">
    <location>
        <position position="153"/>
    </location>
</feature>
<feature type="active site" description="Schiff-base intermediate with substrate" evidence="1">
    <location>
        <position position="184"/>
    </location>
</feature>
<feature type="binding site" evidence="1">
    <location>
        <begin position="33"/>
        <end position="37"/>
    </location>
    <ligand>
        <name>1-deoxy-D-threo-hexo-2,5-diulose 6-phosphate</name>
        <dbReference type="ChEBI" id="CHEBI:58861"/>
    </ligand>
</feature>
<feature type="binding site" evidence="1">
    <location>
        <begin position="153"/>
        <end position="155"/>
    </location>
    <ligand>
        <name>1-deoxy-D-threo-hexo-2,5-diulose 6-phosphate</name>
        <dbReference type="ChEBI" id="CHEBI:58861"/>
    </ligand>
</feature>
<feature type="binding site" evidence="1">
    <location>
        <begin position="209"/>
        <end position="210"/>
    </location>
    <ligand>
        <name>1-deoxy-D-threo-hexo-2,5-diulose 6-phosphate</name>
        <dbReference type="ChEBI" id="CHEBI:58861"/>
    </ligand>
</feature>
<feature type="binding site" evidence="1">
    <location>
        <begin position="236"/>
        <end position="237"/>
    </location>
    <ligand>
        <name>1-deoxy-D-threo-hexo-2,5-diulose 6-phosphate</name>
        <dbReference type="ChEBI" id="CHEBI:58861"/>
    </ligand>
</feature>
<accession>A6UTT2</accession>
<dbReference type="EC" id="2.2.1.10" evidence="1"/>
<dbReference type="EMBL" id="CP000743">
    <property type="protein sequence ID" value="ABR55904.1"/>
    <property type="molecule type" value="Genomic_DNA"/>
</dbReference>
<dbReference type="RefSeq" id="WP_011973036.1">
    <property type="nucleotide sequence ID" value="NC_009635.1"/>
</dbReference>
<dbReference type="SMR" id="A6UTT2"/>
<dbReference type="STRING" id="419665.Maeo_0316"/>
<dbReference type="GeneID" id="5327000"/>
<dbReference type="KEGG" id="mae:Maeo_0316"/>
<dbReference type="eggNOG" id="arCOG04044">
    <property type="taxonomic scope" value="Archaea"/>
</dbReference>
<dbReference type="HOGENOM" id="CLU_057069_2_0_2"/>
<dbReference type="OrthoDB" id="50091at2157"/>
<dbReference type="Proteomes" id="UP000001106">
    <property type="component" value="Chromosome"/>
</dbReference>
<dbReference type="GO" id="GO:0004332">
    <property type="term" value="F:fructose-bisphosphate aldolase activity"/>
    <property type="evidence" value="ECO:0007669"/>
    <property type="project" value="InterPro"/>
</dbReference>
<dbReference type="GO" id="GO:0016836">
    <property type="term" value="F:hydro-lyase activity"/>
    <property type="evidence" value="ECO:0007669"/>
    <property type="project" value="InterPro"/>
</dbReference>
<dbReference type="GO" id="GO:0016744">
    <property type="term" value="F:transketolase or transaldolase activity"/>
    <property type="evidence" value="ECO:0007669"/>
    <property type="project" value="UniProtKB-UniRule"/>
</dbReference>
<dbReference type="GO" id="GO:0008652">
    <property type="term" value="P:amino acid biosynthetic process"/>
    <property type="evidence" value="ECO:0007669"/>
    <property type="project" value="UniProtKB-KW"/>
</dbReference>
<dbReference type="GO" id="GO:0009073">
    <property type="term" value="P:aromatic amino acid family biosynthetic process"/>
    <property type="evidence" value="ECO:0007669"/>
    <property type="project" value="UniProtKB-UniRule"/>
</dbReference>
<dbReference type="CDD" id="cd00958">
    <property type="entry name" value="DhnA"/>
    <property type="match status" value="1"/>
</dbReference>
<dbReference type="Gene3D" id="3.20.20.70">
    <property type="entry name" value="Aldolase class I"/>
    <property type="match status" value="1"/>
</dbReference>
<dbReference type="HAMAP" id="MF_00960">
    <property type="entry name" value="ADH_synthase"/>
    <property type="match status" value="1"/>
</dbReference>
<dbReference type="InterPro" id="IPR010210">
    <property type="entry name" value="ADH_synthase"/>
</dbReference>
<dbReference type="InterPro" id="IPR013785">
    <property type="entry name" value="Aldolase_TIM"/>
</dbReference>
<dbReference type="InterPro" id="IPR002915">
    <property type="entry name" value="DeoC/FbaB/LacD_aldolase"/>
</dbReference>
<dbReference type="InterPro" id="IPR050456">
    <property type="entry name" value="DeoC/FbaB_aldolase"/>
</dbReference>
<dbReference type="InterPro" id="IPR041720">
    <property type="entry name" value="FbaB-like"/>
</dbReference>
<dbReference type="NCBIfam" id="TIGR01949">
    <property type="entry name" value="ADH_synth"/>
    <property type="match status" value="1"/>
</dbReference>
<dbReference type="NCBIfam" id="NF005556">
    <property type="entry name" value="PRK07226.1"/>
    <property type="match status" value="1"/>
</dbReference>
<dbReference type="PANTHER" id="PTHR47916:SF1">
    <property type="entry name" value="3-HYDROXY-5-PHOSPHONOOXYPENTANE-2,4-DIONE THIOLASE"/>
    <property type="match status" value="1"/>
</dbReference>
<dbReference type="PANTHER" id="PTHR47916">
    <property type="entry name" value="FRUCTOSE-BISPHOSPHATE ALDOLASE CLASS 1"/>
    <property type="match status" value="1"/>
</dbReference>
<dbReference type="Pfam" id="PF01791">
    <property type="entry name" value="DeoC"/>
    <property type="match status" value="1"/>
</dbReference>
<dbReference type="PIRSF" id="PIRSF038992">
    <property type="entry name" value="Aldolase_Ia"/>
    <property type="match status" value="1"/>
</dbReference>
<dbReference type="SMART" id="SM01133">
    <property type="entry name" value="DeoC"/>
    <property type="match status" value="1"/>
</dbReference>
<dbReference type="SUPFAM" id="SSF51569">
    <property type="entry name" value="Aldolase"/>
    <property type="match status" value="1"/>
</dbReference>